<name>PMM2_MACFA</name>
<accession>Q60HD6</accession>
<sequence length="246" mass="28024">MAAPGPALCLFDVDGTLTAPRQKITKEMDDFLQKLRQKIKIGVVGGSDFEKVQEQLGNDVVEKYDYVFPENGLVAYKDGKLLCKQNIQSHLGEALIQDLINYCLSYIAKVKLPKKRGTFIEFRNGMLNVSPIGRSCSQEERIEFYELDKKENIRQKFVADLRKEFAGKGLTFSIGGQISFDVFPDGWDKRYCLRHVENDGYKTIYFFGDKTMPGGNDHEIFTDPRTVGYSVTAPEDTRRICEELFS</sequence>
<keyword id="KW-0007">Acetylation</keyword>
<keyword id="KW-0963">Cytoplasm</keyword>
<keyword id="KW-0413">Isomerase</keyword>
<keyword id="KW-0460">Magnesium</keyword>
<keyword id="KW-0479">Metal-binding</keyword>
<keyword id="KW-1185">Reference proteome</keyword>
<reference key="1">
    <citation type="submission" date="2003-10" db="EMBL/GenBank/DDBJ databases">
        <title>Isolation and characterization of cDNA for macaque neurological disease genes.</title>
        <authorList>
            <person name="Kusuda J."/>
            <person name="Osada N."/>
            <person name="Tanuma R."/>
            <person name="Hirata M."/>
            <person name="Sugano S."/>
            <person name="Hashimoto K."/>
        </authorList>
    </citation>
    <scope>NUCLEOTIDE SEQUENCE [LARGE SCALE MRNA]</scope>
    <source>
        <tissue>Temporal cortex</tissue>
    </source>
</reference>
<dbReference type="EC" id="5.4.2.8"/>
<dbReference type="EMBL" id="AB125191">
    <property type="protein sequence ID" value="BAD51979.1"/>
    <property type="molecule type" value="mRNA"/>
</dbReference>
<dbReference type="RefSeq" id="NP_001272027.1">
    <property type="nucleotide sequence ID" value="NM_001285098.1"/>
</dbReference>
<dbReference type="RefSeq" id="XP_015297658.2">
    <property type="nucleotide sequence ID" value="XM_015442172.3"/>
</dbReference>
<dbReference type="SMR" id="Q60HD6"/>
<dbReference type="STRING" id="9541.ENSMFAP00000017019"/>
<dbReference type="GeneID" id="102146519"/>
<dbReference type="KEGG" id="mcf:102146519"/>
<dbReference type="CTD" id="5373"/>
<dbReference type="eggNOG" id="KOG3189">
    <property type="taxonomic scope" value="Eukaryota"/>
</dbReference>
<dbReference type="UniPathway" id="UPA00126">
    <property type="reaction ID" value="UER00424"/>
</dbReference>
<dbReference type="Proteomes" id="UP000233100">
    <property type="component" value="Unplaced"/>
</dbReference>
<dbReference type="GO" id="GO:0005829">
    <property type="term" value="C:cytosol"/>
    <property type="evidence" value="ECO:0007669"/>
    <property type="project" value="TreeGrafter"/>
</dbReference>
<dbReference type="GO" id="GO:0046872">
    <property type="term" value="F:metal ion binding"/>
    <property type="evidence" value="ECO:0007669"/>
    <property type="project" value="UniProtKB-KW"/>
</dbReference>
<dbReference type="GO" id="GO:0004615">
    <property type="term" value="F:phosphomannomutase activity"/>
    <property type="evidence" value="ECO:0007669"/>
    <property type="project" value="UniProtKB-EC"/>
</dbReference>
<dbReference type="GO" id="GO:0009298">
    <property type="term" value="P:GDP-mannose biosynthetic process"/>
    <property type="evidence" value="ECO:0007669"/>
    <property type="project" value="UniProtKB-UniPathway"/>
</dbReference>
<dbReference type="GO" id="GO:0006013">
    <property type="term" value="P:mannose metabolic process"/>
    <property type="evidence" value="ECO:0007669"/>
    <property type="project" value="TreeGrafter"/>
</dbReference>
<dbReference type="GO" id="GO:0006487">
    <property type="term" value="P:protein N-linked glycosylation"/>
    <property type="evidence" value="ECO:0007669"/>
    <property type="project" value="TreeGrafter"/>
</dbReference>
<dbReference type="CDD" id="cd02585">
    <property type="entry name" value="HAD_PMM"/>
    <property type="match status" value="1"/>
</dbReference>
<dbReference type="FunFam" id="3.30.1240.20:FF:000001">
    <property type="entry name" value="Phosphomannomutase"/>
    <property type="match status" value="1"/>
</dbReference>
<dbReference type="FunFam" id="3.40.50.1000:FF:000216">
    <property type="entry name" value="Phosphomannomutase"/>
    <property type="match status" value="2"/>
</dbReference>
<dbReference type="Gene3D" id="3.30.1240.20">
    <property type="match status" value="1"/>
</dbReference>
<dbReference type="Gene3D" id="3.40.50.1000">
    <property type="entry name" value="HAD superfamily/HAD-like"/>
    <property type="match status" value="1"/>
</dbReference>
<dbReference type="InterPro" id="IPR036412">
    <property type="entry name" value="HAD-like_sf"/>
</dbReference>
<dbReference type="InterPro" id="IPR006379">
    <property type="entry name" value="HAD-SF_hydro_IIB"/>
</dbReference>
<dbReference type="InterPro" id="IPR023214">
    <property type="entry name" value="HAD_sf"/>
</dbReference>
<dbReference type="InterPro" id="IPR005002">
    <property type="entry name" value="PMM"/>
</dbReference>
<dbReference type="InterPro" id="IPR043169">
    <property type="entry name" value="PMM_cap"/>
</dbReference>
<dbReference type="NCBIfam" id="TIGR01484">
    <property type="entry name" value="HAD-SF-IIB"/>
    <property type="match status" value="1"/>
</dbReference>
<dbReference type="PANTHER" id="PTHR10466">
    <property type="entry name" value="PHOSPHOMANNOMUTASE"/>
    <property type="match status" value="1"/>
</dbReference>
<dbReference type="PANTHER" id="PTHR10466:SF2">
    <property type="entry name" value="PHOSPHOMANNOMUTASE 2"/>
    <property type="match status" value="1"/>
</dbReference>
<dbReference type="Pfam" id="PF03332">
    <property type="entry name" value="PMM"/>
    <property type="match status" value="1"/>
</dbReference>
<dbReference type="SFLD" id="SFLDF00445">
    <property type="entry name" value="alpha-phosphomannomutase"/>
    <property type="match status" value="1"/>
</dbReference>
<dbReference type="SFLD" id="SFLDS00003">
    <property type="entry name" value="Haloacid_Dehalogenase"/>
    <property type="match status" value="1"/>
</dbReference>
<dbReference type="SUPFAM" id="SSF56784">
    <property type="entry name" value="HAD-like"/>
    <property type="match status" value="1"/>
</dbReference>
<gene>
    <name type="primary">PMM2</name>
    <name type="ORF">QtrA-14736</name>
</gene>
<protein>
    <recommendedName>
        <fullName>Phosphomannomutase 2</fullName>
        <shortName>PMM 2</shortName>
        <ecNumber>5.4.2.8</ecNumber>
    </recommendedName>
</protein>
<comment type="function">
    <text evidence="1">Involved in the synthesis of the GDP-mannose and dolichol-phosphate-mannose required for a number of critical mannosyl transfer reactions.</text>
</comment>
<comment type="catalytic activity">
    <reaction>
        <text>alpha-D-mannose 1-phosphate = D-mannose 6-phosphate</text>
        <dbReference type="Rhea" id="RHEA:11140"/>
        <dbReference type="ChEBI" id="CHEBI:58409"/>
        <dbReference type="ChEBI" id="CHEBI:58735"/>
        <dbReference type="EC" id="5.4.2.8"/>
    </reaction>
</comment>
<comment type="pathway">
    <text>Nucleotide-sugar biosynthesis; GDP-alpha-D-mannose biosynthesis; alpha-D-mannose 1-phosphate from D-fructose 6-phosphate: step 2/2.</text>
</comment>
<comment type="subunit">
    <text evidence="1">Homodimer.</text>
</comment>
<comment type="subcellular location">
    <subcellularLocation>
        <location evidence="1">Cytoplasm</location>
    </subcellularLocation>
</comment>
<comment type="similarity">
    <text evidence="6">Belongs to the eukaryotic PMM family.</text>
</comment>
<organism>
    <name type="scientific">Macaca fascicularis</name>
    <name type="common">Crab-eating macaque</name>
    <name type="synonym">Cynomolgus monkey</name>
    <dbReference type="NCBI Taxonomy" id="9541"/>
    <lineage>
        <taxon>Eukaryota</taxon>
        <taxon>Metazoa</taxon>
        <taxon>Chordata</taxon>
        <taxon>Craniata</taxon>
        <taxon>Vertebrata</taxon>
        <taxon>Euteleostomi</taxon>
        <taxon>Mammalia</taxon>
        <taxon>Eutheria</taxon>
        <taxon>Euarchontoglires</taxon>
        <taxon>Primates</taxon>
        <taxon>Haplorrhini</taxon>
        <taxon>Catarrhini</taxon>
        <taxon>Cercopithecidae</taxon>
        <taxon>Cercopithecinae</taxon>
        <taxon>Macaca</taxon>
    </lineage>
</organism>
<proteinExistence type="evidence at transcript level"/>
<evidence type="ECO:0000250" key="1"/>
<evidence type="ECO:0000250" key="2">
    <source>
        <dbReference type="UniProtKB" id="O15305"/>
    </source>
</evidence>
<evidence type="ECO:0000250" key="3">
    <source>
        <dbReference type="UniProtKB" id="P31353"/>
    </source>
</evidence>
<evidence type="ECO:0000250" key="4">
    <source>
        <dbReference type="UniProtKB" id="Q92871"/>
    </source>
</evidence>
<evidence type="ECO:0000250" key="5">
    <source>
        <dbReference type="UniProtKB" id="Q9Z2M7"/>
    </source>
</evidence>
<evidence type="ECO:0000305" key="6"/>
<feature type="initiator methionine" description="Removed" evidence="2">
    <location>
        <position position="1"/>
    </location>
</feature>
<feature type="chain" id="PRO_0000199695" description="Phosphomannomutase 2">
    <location>
        <begin position="2"/>
        <end position="246"/>
    </location>
</feature>
<feature type="active site" description="Nucleophile" evidence="4">
    <location>
        <position position="12"/>
    </location>
</feature>
<feature type="active site" description="Proton donor/acceptor" evidence="4">
    <location>
        <position position="14"/>
    </location>
</feature>
<feature type="binding site" evidence="4">
    <location>
        <position position="12"/>
    </location>
    <ligand>
        <name>Mg(2+)</name>
        <dbReference type="ChEBI" id="CHEBI:18420"/>
        <label>1</label>
    </ligand>
</feature>
<feature type="binding site" evidence="4">
    <location>
        <position position="14"/>
    </location>
    <ligand>
        <name>Mg(2+)</name>
        <dbReference type="ChEBI" id="CHEBI:18420"/>
        <label>1</label>
    </ligand>
</feature>
<feature type="binding site" evidence="4">
    <location>
        <position position="21"/>
    </location>
    <ligand>
        <name>alpha-D-mannose 1-phosphate</name>
        <dbReference type="ChEBI" id="CHEBI:58409"/>
    </ligand>
</feature>
<feature type="binding site" evidence="4">
    <location>
        <position position="123"/>
    </location>
    <ligand>
        <name>alpha-D-mannose 1-phosphate</name>
        <dbReference type="ChEBI" id="CHEBI:58409"/>
    </ligand>
</feature>
<feature type="binding site" evidence="4">
    <location>
        <position position="134"/>
    </location>
    <ligand>
        <name>alpha-D-mannose 1-phosphate</name>
        <dbReference type="ChEBI" id="CHEBI:58409"/>
    </ligand>
</feature>
<feature type="binding site" evidence="4">
    <location>
        <position position="141"/>
    </location>
    <ligand>
        <name>alpha-D-mannose 1-phosphate</name>
        <dbReference type="ChEBI" id="CHEBI:58409"/>
    </ligand>
</feature>
<feature type="binding site" evidence="4">
    <location>
        <position position="179"/>
    </location>
    <ligand>
        <name>alpha-D-mannose 1-phosphate</name>
        <dbReference type="ChEBI" id="CHEBI:58409"/>
    </ligand>
</feature>
<feature type="binding site" evidence="4">
    <location>
        <position position="181"/>
    </location>
    <ligand>
        <name>alpha-D-mannose 1-phosphate</name>
        <dbReference type="ChEBI" id="CHEBI:58409"/>
    </ligand>
</feature>
<feature type="binding site" evidence="3">
    <location>
        <position position="209"/>
    </location>
    <ligand>
        <name>Mg(2+)</name>
        <dbReference type="ChEBI" id="CHEBI:18420"/>
        <label>1</label>
    </ligand>
</feature>
<feature type="binding site" evidence="4">
    <location>
        <position position="221"/>
    </location>
    <ligand>
        <name>Mg(2+)</name>
        <dbReference type="ChEBI" id="CHEBI:18420"/>
        <label>2</label>
    </ligand>
</feature>
<feature type="binding site" evidence="4">
    <location>
        <position position="223"/>
    </location>
    <ligand>
        <name>Mg(2+)</name>
        <dbReference type="ChEBI" id="CHEBI:18420"/>
        <label>2</label>
    </ligand>
</feature>
<feature type="binding site" evidence="4">
    <location>
        <position position="226"/>
    </location>
    <ligand>
        <name>Mg(2+)</name>
        <dbReference type="ChEBI" id="CHEBI:18420"/>
        <label>2</label>
    </ligand>
</feature>
<feature type="modified residue" description="N-acetylalanine" evidence="2">
    <location>
        <position position="2"/>
    </location>
</feature>
<feature type="modified residue" description="N6-acetyllysine" evidence="5">
    <location>
        <position position="149"/>
    </location>
</feature>